<reference key="1">
    <citation type="journal article" date="2008" name="PLoS Genet.">
        <title>Genomic islands in the pathogenic filamentous fungus Aspergillus fumigatus.</title>
        <authorList>
            <person name="Fedorova N.D."/>
            <person name="Khaldi N."/>
            <person name="Joardar V.S."/>
            <person name="Maiti R."/>
            <person name="Amedeo P."/>
            <person name="Anderson M.J."/>
            <person name="Crabtree J."/>
            <person name="Silva J.C."/>
            <person name="Badger J.H."/>
            <person name="Albarraq A."/>
            <person name="Angiuoli S."/>
            <person name="Bussey H."/>
            <person name="Bowyer P."/>
            <person name="Cotty P.J."/>
            <person name="Dyer P.S."/>
            <person name="Egan A."/>
            <person name="Galens K."/>
            <person name="Fraser-Liggett C.M."/>
            <person name="Haas B.J."/>
            <person name="Inman J.M."/>
            <person name="Kent R."/>
            <person name="Lemieux S."/>
            <person name="Malavazi I."/>
            <person name="Orvis J."/>
            <person name="Roemer T."/>
            <person name="Ronning C.M."/>
            <person name="Sundaram J.P."/>
            <person name="Sutton G."/>
            <person name="Turner G."/>
            <person name="Venter J.C."/>
            <person name="White O.R."/>
            <person name="Whitty B.R."/>
            <person name="Youngman P."/>
            <person name="Wolfe K.H."/>
            <person name="Goldman G.H."/>
            <person name="Wortman J.R."/>
            <person name="Jiang B."/>
            <person name="Denning D.W."/>
            <person name="Nierman W.C."/>
        </authorList>
    </citation>
    <scope>NUCLEOTIDE SEQUENCE [LARGE SCALE GENOMIC DNA]</scope>
    <source>
        <strain>CBS 144.89 / FGSC A1163 / CEA10</strain>
    </source>
</reference>
<accession>B0Y4Z4</accession>
<comment type="function">
    <text evidence="1">Involved in maceration and soft-rotting of plant tissue. Hydrolyzes the 1,4-alpha glycosidic bonds of de-esterified pectate in the smooth region of the plant cell wall (By similarity).</text>
</comment>
<comment type="catalytic activity">
    <reaction>
        <text>(1,4-alpha-D-galacturonosyl)n+m + H2O = (1,4-alpha-D-galacturonosyl)n + (1,4-alpha-D-galacturonosyl)m.</text>
        <dbReference type="EC" id="3.2.1.15"/>
    </reaction>
</comment>
<comment type="subcellular location">
    <subcellularLocation>
        <location evidence="1">Secreted</location>
    </subcellularLocation>
</comment>
<comment type="similarity">
    <text evidence="4">Belongs to the glycosyl hydrolase 28 family.</text>
</comment>
<name>PGLRA_ASPFC</name>
<gene>
    <name type="primary">pgaA</name>
    <name type="synonym">pecA</name>
    <name type="ORF">AFUB_070830</name>
</gene>
<feature type="signal peptide" evidence="2">
    <location>
        <begin position="1"/>
        <end position="18"/>
    </location>
</feature>
<feature type="propeptide" id="PRO_0000393635" evidence="2">
    <location>
        <begin position="19"/>
        <end position="31"/>
    </location>
</feature>
<feature type="chain" id="PRO_0000393636" description="Probable endopolygalacturonase A">
    <location>
        <begin position="32"/>
        <end position="368"/>
    </location>
</feature>
<feature type="repeat" description="PbH1 1">
    <location>
        <begin position="140"/>
        <end position="162"/>
    </location>
</feature>
<feature type="repeat" description="PbH1 2">
    <location>
        <begin position="167"/>
        <end position="192"/>
    </location>
</feature>
<feature type="repeat" description="PbH1 3">
    <location>
        <begin position="193"/>
        <end position="214"/>
    </location>
</feature>
<feature type="repeat" description="PbH1 4">
    <location>
        <begin position="215"/>
        <end position="235"/>
    </location>
</feature>
<feature type="repeat" description="PbH1 5">
    <location>
        <begin position="244"/>
        <end position="265"/>
    </location>
</feature>
<feature type="repeat" description="PbH1 6">
    <location>
        <begin position="273"/>
        <end position="295"/>
    </location>
</feature>
<feature type="repeat" description="PbH1 7">
    <location>
        <begin position="307"/>
        <end position="352"/>
    </location>
</feature>
<feature type="active site" description="Proton donor" evidence="3">
    <location>
        <position position="207"/>
    </location>
</feature>
<feature type="active site" evidence="3">
    <location>
        <position position="229"/>
    </location>
</feature>
<feature type="glycosylation site" description="N-linked (GlcNAc...) asparagine" evidence="2">
    <location>
        <position position="246"/>
    </location>
</feature>
<feature type="disulfide bond" evidence="1">
    <location>
        <begin position="35"/>
        <end position="50"/>
    </location>
</feature>
<feature type="disulfide bond" evidence="1">
    <location>
        <begin position="209"/>
        <end position="225"/>
    </location>
</feature>
<feature type="disulfide bond" evidence="1">
    <location>
        <begin position="335"/>
        <end position="340"/>
    </location>
</feature>
<feature type="disulfide bond" evidence="1">
    <location>
        <begin position="359"/>
        <end position="368"/>
    </location>
</feature>
<proteinExistence type="inferred from homology"/>
<keyword id="KW-0961">Cell wall biogenesis/degradation</keyword>
<keyword id="KW-1015">Disulfide bond</keyword>
<keyword id="KW-0325">Glycoprotein</keyword>
<keyword id="KW-0326">Glycosidase</keyword>
<keyword id="KW-0378">Hydrolase</keyword>
<keyword id="KW-0677">Repeat</keyword>
<keyword id="KW-0964">Secreted</keyword>
<keyword id="KW-0732">Signal</keyword>
<keyword id="KW-0865">Zymogen</keyword>
<organism>
    <name type="scientific">Aspergillus fumigatus (strain CBS 144.89 / FGSC A1163 / CEA10)</name>
    <name type="common">Neosartorya fumigata</name>
    <dbReference type="NCBI Taxonomy" id="451804"/>
    <lineage>
        <taxon>Eukaryota</taxon>
        <taxon>Fungi</taxon>
        <taxon>Dikarya</taxon>
        <taxon>Ascomycota</taxon>
        <taxon>Pezizomycotina</taxon>
        <taxon>Eurotiomycetes</taxon>
        <taxon>Eurotiomycetidae</taxon>
        <taxon>Eurotiales</taxon>
        <taxon>Aspergillaceae</taxon>
        <taxon>Aspergillus</taxon>
        <taxon>Aspergillus subgen. Fumigati</taxon>
    </lineage>
</organism>
<dbReference type="EC" id="3.2.1.15"/>
<dbReference type="EMBL" id="DS499598">
    <property type="protein sequence ID" value="EDP50743.1"/>
    <property type="molecule type" value="Genomic_DNA"/>
</dbReference>
<dbReference type="SMR" id="B0Y4Z4"/>
<dbReference type="GlyCosmos" id="B0Y4Z4">
    <property type="glycosylation" value="1 site, No reported glycans"/>
</dbReference>
<dbReference type="EnsemblFungi" id="EDP50743">
    <property type="protein sequence ID" value="EDP50743"/>
    <property type="gene ID" value="AFUB_070830"/>
</dbReference>
<dbReference type="VEuPathDB" id="FungiDB:AFUB_070830"/>
<dbReference type="HOGENOM" id="CLU_040116_0_0_1"/>
<dbReference type="OrthoDB" id="98443at5052"/>
<dbReference type="PhylomeDB" id="B0Y4Z4"/>
<dbReference type="Proteomes" id="UP000001699">
    <property type="component" value="Unassembled WGS sequence"/>
</dbReference>
<dbReference type="GO" id="GO:0005576">
    <property type="term" value="C:extracellular region"/>
    <property type="evidence" value="ECO:0000250"/>
    <property type="project" value="UniProtKB"/>
</dbReference>
<dbReference type="GO" id="GO:0004650">
    <property type="term" value="F:polygalacturonase activity"/>
    <property type="evidence" value="ECO:0000250"/>
    <property type="project" value="UniProtKB"/>
</dbReference>
<dbReference type="GO" id="GO:0071555">
    <property type="term" value="P:cell wall organization"/>
    <property type="evidence" value="ECO:0007669"/>
    <property type="project" value="UniProtKB-KW"/>
</dbReference>
<dbReference type="GO" id="GO:0045490">
    <property type="term" value="P:pectin catabolic process"/>
    <property type="evidence" value="ECO:0000250"/>
    <property type="project" value="UniProtKB"/>
</dbReference>
<dbReference type="FunFam" id="2.160.20.10:FF:000002">
    <property type="entry name" value="Endopolygalacturonase D"/>
    <property type="match status" value="1"/>
</dbReference>
<dbReference type="Gene3D" id="2.160.20.10">
    <property type="entry name" value="Single-stranded right-handed beta-helix, Pectin lyase-like"/>
    <property type="match status" value="1"/>
</dbReference>
<dbReference type="InterPro" id="IPR000743">
    <property type="entry name" value="Glyco_hydro_28"/>
</dbReference>
<dbReference type="InterPro" id="IPR050434">
    <property type="entry name" value="Glycosyl_hydrlase_28"/>
</dbReference>
<dbReference type="InterPro" id="IPR006626">
    <property type="entry name" value="PbH1"/>
</dbReference>
<dbReference type="InterPro" id="IPR012334">
    <property type="entry name" value="Pectin_lyas_fold"/>
</dbReference>
<dbReference type="InterPro" id="IPR011050">
    <property type="entry name" value="Pectin_lyase_fold/virulence"/>
</dbReference>
<dbReference type="PANTHER" id="PTHR31884:SF13">
    <property type="entry name" value="ENDOPOLYGALACTURONASE B"/>
    <property type="match status" value="1"/>
</dbReference>
<dbReference type="PANTHER" id="PTHR31884">
    <property type="entry name" value="POLYGALACTURONASE"/>
    <property type="match status" value="1"/>
</dbReference>
<dbReference type="Pfam" id="PF00295">
    <property type="entry name" value="Glyco_hydro_28"/>
    <property type="match status" value="1"/>
</dbReference>
<dbReference type="SMART" id="SM00710">
    <property type="entry name" value="PbH1"/>
    <property type="match status" value="7"/>
</dbReference>
<dbReference type="SUPFAM" id="SSF51126">
    <property type="entry name" value="Pectin lyase-like"/>
    <property type="match status" value="1"/>
</dbReference>
<dbReference type="PROSITE" id="PS00502">
    <property type="entry name" value="POLYGALACTURONASE"/>
    <property type="match status" value="1"/>
</dbReference>
<sequence>MRSVKLFGLAALGSLGAAAPAPSRVSDLTKRSSTCTFTAASQATESASGCSEIVLDNIEVPAGETLDLSDVDDGTTIVFEGTTTFGYKEWSGPLIRFGGKDITIKQNSGAVIDGEGSRWWDGEGTNGGKTKPKFMYAHSLEDSTITGLSIKNTPVQAISVQATNLYLIDITIDNSDGDDNGGHNTDGFDISESTGVYIRGATVKNQDDCIAINSGENIEFSGGTCSGGHGLSIGSVGGRDDNTVKNVTITDSTVTDSANGVRIKTVYDATGSVSQVTYSNIKLSGITDYGIVIEQDYENGSPTGTPTTGVPITDLTIDGVTGTVESDAVEVYILCGDGSCSDWTWEGVDITGGEKSSKCENVPSGASC</sequence>
<protein>
    <recommendedName>
        <fullName>Probable endopolygalacturonase A</fullName>
        <ecNumber>3.2.1.15</ecNumber>
    </recommendedName>
    <alternativeName>
        <fullName>Pectinase A</fullName>
    </alternativeName>
    <alternativeName>
        <fullName>Polygalacturonase A</fullName>
    </alternativeName>
</protein>
<evidence type="ECO:0000250" key="1"/>
<evidence type="ECO:0000255" key="2"/>
<evidence type="ECO:0000255" key="3">
    <source>
        <dbReference type="PROSITE-ProRule" id="PRU10052"/>
    </source>
</evidence>
<evidence type="ECO:0000305" key="4"/>